<name>COAX_XANC8</name>
<feature type="chain" id="PRO_0000270910" description="Type III pantothenate kinase">
    <location>
        <begin position="1"/>
        <end position="242"/>
    </location>
</feature>
<feature type="active site" description="Proton acceptor" evidence="1">
    <location>
        <position position="100"/>
    </location>
</feature>
<feature type="binding site" evidence="1">
    <location>
        <begin position="7"/>
        <end position="14"/>
    </location>
    <ligand>
        <name>ATP</name>
        <dbReference type="ChEBI" id="CHEBI:30616"/>
    </ligand>
</feature>
<feature type="binding site" evidence="1">
    <location>
        <position position="91"/>
    </location>
    <ligand>
        <name>substrate</name>
    </ligand>
</feature>
<feature type="binding site" evidence="1">
    <location>
        <begin position="98"/>
        <end position="101"/>
    </location>
    <ligand>
        <name>substrate</name>
    </ligand>
</feature>
<feature type="binding site" evidence="1">
    <location>
        <position position="121"/>
    </location>
    <ligand>
        <name>ATP</name>
        <dbReference type="ChEBI" id="CHEBI:30616"/>
    </ligand>
</feature>
<feature type="binding site" evidence="1">
    <location>
        <position position="171"/>
    </location>
    <ligand>
        <name>substrate</name>
    </ligand>
</feature>
<evidence type="ECO:0000255" key="1">
    <source>
        <dbReference type="HAMAP-Rule" id="MF_01274"/>
    </source>
</evidence>
<keyword id="KW-0067">ATP-binding</keyword>
<keyword id="KW-0173">Coenzyme A biosynthesis</keyword>
<keyword id="KW-0963">Cytoplasm</keyword>
<keyword id="KW-0418">Kinase</keyword>
<keyword id="KW-0547">Nucleotide-binding</keyword>
<keyword id="KW-0630">Potassium</keyword>
<keyword id="KW-0808">Transferase</keyword>
<organism>
    <name type="scientific">Xanthomonas campestris pv. campestris (strain 8004)</name>
    <dbReference type="NCBI Taxonomy" id="314565"/>
    <lineage>
        <taxon>Bacteria</taxon>
        <taxon>Pseudomonadati</taxon>
        <taxon>Pseudomonadota</taxon>
        <taxon>Gammaproteobacteria</taxon>
        <taxon>Lysobacterales</taxon>
        <taxon>Lysobacteraceae</taxon>
        <taxon>Xanthomonas</taxon>
    </lineage>
</organism>
<accession>Q4UPF9</accession>
<comment type="function">
    <text evidence="1">Catalyzes the phosphorylation of pantothenate (Pan), the first step in CoA biosynthesis.</text>
</comment>
<comment type="catalytic activity">
    <reaction evidence="1">
        <text>(R)-pantothenate + ATP = (R)-4'-phosphopantothenate + ADP + H(+)</text>
        <dbReference type="Rhea" id="RHEA:16373"/>
        <dbReference type="ChEBI" id="CHEBI:10986"/>
        <dbReference type="ChEBI" id="CHEBI:15378"/>
        <dbReference type="ChEBI" id="CHEBI:29032"/>
        <dbReference type="ChEBI" id="CHEBI:30616"/>
        <dbReference type="ChEBI" id="CHEBI:456216"/>
        <dbReference type="EC" id="2.7.1.33"/>
    </reaction>
</comment>
<comment type="cofactor">
    <cofactor evidence="1">
        <name>NH4(+)</name>
        <dbReference type="ChEBI" id="CHEBI:28938"/>
    </cofactor>
    <cofactor evidence="1">
        <name>K(+)</name>
        <dbReference type="ChEBI" id="CHEBI:29103"/>
    </cofactor>
    <text evidence="1">A monovalent cation. Ammonium or potassium.</text>
</comment>
<comment type="pathway">
    <text evidence="1">Cofactor biosynthesis; coenzyme A biosynthesis; CoA from (R)-pantothenate: step 1/5.</text>
</comment>
<comment type="subunit">
    <text evidence="1">Homodimer.</text>
</comment>
<comment type="subcellular location">
    <subcellularLocation>
        <location evidence="1">Cytoplasm</location>
    </subcellularLocation>
</comment>
<comment type="similarity">
    <text evidence="1">Belongs to the type III pantothenate kinase family.</text>
</comment>
<gene>
    <name evidence="1" type="primary">coaX</name>
    <name type="ordered locus">XC_4025</name>
</gene>
<protein>
    <recommendedName>
        <fullName evidence="1">Type III pantothenate kinase</fullName>
        <ecNumber evidence="1">2.7.1.33</ecNumber>
    </recommendedName>
    <alternativeName>
        <fullName evidence="1">PanK-III</fullName>
    </alternativeName>
    <alternativeName>
        <fullName evidence="1">Pantothenic acid kinase</fullName>
    </alternativeName>
</protein>
<reference key="1">
    <citation type="journal article" date="2005" name="Genome Res.">
        <title>Comparative and functional genomic analyses of the pathogenicity of phytopathogen Xanthomonas campestris pv. campestris.</title>
        <authorList>
            <person name="Qian W."/>
            <person name="Jia Y."/>
            <person name="Ren S.-X."/>
            <person name="He Y.-Q."/>
            <person name="Feng J.-X."/>
            <person name="Lu L.-F."/>
            <person name="Sun Q."/>
            <person name="Ying G."/>
            <person name="Tang D.-J."/>
            <person name="Tang H."/>
            <person name="Wu W."/>
            <person name="Hao P."/>
            <person name="Wang L."/>
            <person name="Jiang B.-L."/>
            <person name="Zeng S."/>
            <person name="Gu W.-Y."/>
            <person name="Lu G."/>
            <person name="Rong L."/>
            <person name="Tian Y."/>
            <person name="Yao Z."/>
            <person name="Fu G."/>
            <person name="Chen B."/>
            <person name="Fang R."/>
            <person name="Qiang B."/>
            <person name="Chen Z."/>
            <person name="Zhao G.-P."/>
            <person name="Tang J.-L."/>
            <person name="He C."/>
        </authorList>
    </citation>
    <scope>NUCLEOTIDE SEQUENCE [LARGE SCALE GENOMIC DNA]</scope>
    <source>
        <strain>8004</strain>
    </source>
</reference>
<sequence>MSEWLFDLGNSRFKYAPLDGTRAGDVQAWAHGAEAMDTAALSALPSGKVAHVASVAAAGLTERVLASLRTRFEQVRVVRTAAACAGVRIAYADPSRFGVDRFLALLGARGDAPVLVAGVGTALTIDVLGADGQHHGGRIAASPTTMREALHARAVQLPPTGGAYAELANDTDDALTSGCDGAAVALIERSLQHAARTLGMPVCLLVHGGGAPPLLPLLPTAEFRAALVLDGLATWATHSAAP</sequence>
<proteinExistence type="inferred from homology"/>
<dbReference type="EC" id="2.7.1.33" evidence="1"/>
<dbReference type="EMBL" id="CP000050">
    <property type="protein sequence ID" value="AAY51064.1"/>
    <property type="molecule type" value="Genomic_DNA"/>
</dbReference>
<dbReference type="RefSeq" id="WP_011039010.1">
    <property type="nucleotide sequence ID" value="NZ_CP155948.1"/>
</dbReference>
<dbReference type="SMR" id="Q4UPF9"/>
<dbReference type="KEGG" id="xcb:XC_4025"/>
<dbReference type="HOGENOM" id="CLU_066627_0_0_6"/>
<dbReference type="UniPathway" id="UPA00241">
    <property type="reaction ID" value="UER00352"/>
</dbReference>
<dbReference type="Proteomes" id="UP000000420">
    <property type="component" value="Chromosome"/>
</dbReference>
<dbReference type="GO" id="GO:0005737">
    <property type="term" value="C:cytoplasm"/>
    <property type="evidence" value="ECO:0007669"/>
    <property type="project" value="UniProtKB-SubCell"/>
</dbReference>
<dbReference type="GO" id="GO:0005524">
    <property type="term" value="F:ATP binding"/>
    <property type="evidence" value="ECO:0007669"/>
    <property type="project" value="UniProtKB-UniRule"/>
</dbReference>
<dbReference type="GO" id="GO:0004594">
    <property type="term" value="F:pantothenate kinase activity"/>
    <property type="evidence" value="ECO:0007669"/>
    <property type="project" value="UniProtKB-UniRule"/>
</dbReference>
<dbReference type="GO" id="GO:0015937">
    <property type="term" value="P:coenzyme A biosynthetic process"/>
    <property type="evidence" value="ECO:0007669"/>
    <property type="project" value="UniProtKB-UniRule"/>
</dbReference>
<dbReference type="Gene3D" id="3.30.420.40">
    <property type="match status" value="2"/>
</dbReference>
<dbReference type="HAMAP" id="MF_01274">
    <property type="entry name" value="Pantothen_kinase_3"/>
    <property type="match status" value="1"/>
</dbReference>
<dbReference type="InterPro" id="IPR043129">
    <property type="entry name" value="ATPase_NBD"/>
</dbReference>
<dbReference type="InterPro" id="IPR004619">
    <property type="entry name" value="Type_III_PanK"/>
</dbReference>
<dbReference type="NCBIfam" id="TIGR00671">
    <property type="entry name" value="baf"/>
    <property type="match status" value="1"/>
</dbReference>
<dbReference type="NCBIfam" id="NF009864">
    <property type="entry name" value="PRK13327.1"/>
    <property type="match status" value="1"/>
</dbReference>
<dbReference type="PANTHER" id="PTHR34265">
    <property type="entry name" value="TYPE III PANTOTHENATE KINASE"/>
    <property type="match status" value="1"/>
</dbReference>
<dbReference type="PANTHER" id="PTHR34265:SF1">
    <property type="entry name" value="TYPE III PANTOTHENATE KINASE"/>
    <property type="match status" value="1"/>
</dbReference>
<dbReference type="Pfam" id="PF03309">
    <property type="entry name" value="Pan_kinase"/>
    <property type="match status" value="1"/>
</dbReference>
<dbReference type="SUPFAM" id="SSF53067">
    <property type="entry name" value="Actin-like ATPase domain"/>
    <property type="match status" value="2"/>
</dbReference>